<keyword id="KW-0963">Cytoplasm</keyword>
<keyword id="KW-0350">Heme biosynthesis</keyword>
<keyword id="KW-0408">Iron</keyword>
<keyword id="KW-0456">Lyase</keyword>
<keyword id="KW-0479">Metal-binding</keyword>
<keyword id="KW-0627">Porphyrin biosynthesis</keyword>
<keyword id="KW-1185">Reference proteome</keyword>
<feature type="chain" id="PRO_1000079190" description="Ferrochelatase">
    <location>
        <begin position="1"/>
        <end position="363"/>
    </location>
</feature>
<feature type="binding site" evidence="1">
    <location>
        <position position="209"/>
    </location>
    <ligand>
        <name>Fe cation</name>
        <dbReference type="ChEBI" id="CHEBI:24875"/>
    </ligand>
</feature>
<feature type="binding site" evidence="1">
    <location>
        <position position="290"/>
    </location>
    <ligand>
        <name>Fe cation</name>
        <dbReference type="ChEBI" id="CHEBI:24875"/>
    </ligand>
</feature>
<evidence type="ECO:0000255" key="1">
    <source>
        <dbReference type="HAMAP-Rule" id="MF_00323"/>
    </source>
</evidence>
<dbReference type="EC" id="4.98.1.1" evidence="1"/>
<dbReference type="EMBL" id="AM406670">
    <property type="protein sequence ID" value="CAL95199.1"/>
    <property type="molecule type" value="Genomic_DNA"/>
</dbReference>
<dbReference type="RefSeq" id="WP_011766309.1">
    <property type="nucleotide sequence ID" value="NC_008702.1"/>
</dbReference>
<dbReference type="SMR" id="A1K8P4"/>
<dbReference type="STRING" id="62928.azo2582"/>
<dbReference type="KEGG" id="azo:azo2582"/>
<dbReference type="eggNOG" id="COG0276">
    <property type="taxonomic scope" value="Bacteria"/>
</dbReference>
<dbReference type="HOGENOM" id="CLU_018884_0_0_4"/>
<dbReference type="UniPathway" id="UPA00252">
    <property type="reaction ID" value="UER00325"/>
</dbReference>
<dbReference type="Proteomes" id="UP000002588">
    <property type="component" value="Chromosome"/>
</dbReference>
<dbReference type="GO" id="GO:0005737">
    <property type="term" value="C:cytoplasm"/>
    <property type="evidence" value="ECO:0007669"/>
    <property type="project" value="UniProtKB-SubCell"/>
</dbReference>
<dbReference type="GO" id="GO:0004325">
    <property type="term" value="F:ferrochelatase activity"/>
    <property type="evidence" value="ECO:0007669"/>
    <property type="project" value="UniProtKB-UniRule"/>
</dbReference>
<dbReference type="GO" id="GO:0046872">
    <property type="term" value="F:metal ion binding"/>
    <property type="evidence" value="ECO:0007669"/>
    <property type="project" value="UniProtKB-KW"/>
</dbReference>
<dbReference type="GO" id="GO:0006783">
    <property type="term" value="P:heme biosynthetic process"/>
    <property type="evidence" value="ECO:0007669"/>
    <property type="project" value="UniProtKB-UniRule"/>
</dbReference>
<dbReference type="CDD" id="cd00419">
    <property type="entry name" value="Ferrochelatase_C"/>
    <property type="match status" value="1"/>
</dbReference>
<dbReference type="CDD" id="cd03411">
    <property type="entry name" value="Ferrochelatase_N"/>
    <property type="match status" value="1"/>
</dbReference>
<dbReference type="FunFam" id="3.40.50.1400:FF:000002">
    <property type="entry name" value="Ferrochelatase"/>
    <property type="match status" value="1"/>
</dbReference>
<dbReference type="Gene3D" id="3.40.50.1400">
    <property type="match status" value="2"/>
</dbReference>
<dbReference type="HAMAP" id="MF_00323">
    <property type="entry name" value="Ferrochelatase"/>
    <property type="match status" value="1"/>
</dbReference>
<dbReference type="InterPro" id="IPR001015">
    <property type="entry name" value="Ferrochelatase"/>
</dbReference>
<dbReference type="InterPro" id="IPR019772">
    <property type="entry name" value="Ferrochelatase_AS"/>
</dbReference>
<dbReference type="InterPro" id="IPR033644">
    <property type="entry name" value="Ferrochelatase_C"/>
</dbReference>
<dbReference type="InterPro" id="IPR033659">
    <property type="entry name" value="Ferrochelatase_N"/>
</dbReference>
<dbReference type="NCBIfam" id="TIGR00109">
    <property type="entry name" value="hemH"/>
    <property type="match status" value="1"/>
</dbReference>
<dbReference type="PANTHER" id="PTHR11108">
    <property type="entry name" value="FERROCHELATASE"/>
    <property type="match status" value="1"/>
</dbReference>
<dbReference type="PANTHER" id="PTHR11108:SF1">
    <property type="entry name" value="FERROCHELATASE, MITOCHONDRIAL"/>
    <property type="match status" value="1"/>
</dbReference>
<dbReference type="Pfam" id="PF00762">
    <property type="entry name" value="Ferrochelatase"/>
    <property type="match status" value="1"/>
</dbReference>
<dbReference type="SUPFAM" id="SSF53800">
    <property type="entry name" value="Chelatase"/>
    <property type="match status" value="1"/>
</dbReference>
<dbReference type="PROSITE" id="PS00534">
    <property type="entry name" value="FERROCHELATASE"/>
    <property type="match status" value="1"/>
</dbReference>
<accession>A1K8P4</accession>
<reference key="1">
    <citation type="journal article" date="2006" name="Nat. Biotechnol.">
        <title>Complete genome of the mutualistic, N2-fixing grass endophyte Azoarcus sp. strain BH72.</title>
        <authorList>
            <person name="Krause A."/>
            <person name="Ramakumar A."/>
            <person name="Bartels D."/>
            <person name="Battistoni F."/>
            <person name="Bekel T."/>
            <person name="Boch J."/>
            <person name="Boehm M."/>
            <person name="Friedrich F."/>
            <person name="Hurek T."/>
            <person name="Krause L."/>
            <person name="Linke B."/>
            <person name="McHardy A.C."/>
            <person name="Sarkar A."/>
            <person name="Schneiker S."/>
            <person name="Syed A.A."/>
            <person name="Thauer R."/>
            <person name="Vorhoelter F.-J."/>
            <person name="Weidner S."/>
            <person name="Puehler A."/>
            <person name="Reinhold-Hurek B."/>
            <person name="Kaiser O."/>
            <person name="Goesmann A."/>
        </authorList>
    </citation>
    <scope>NUCLEOTIDE SEQUENCE [LARGE SCALE GENOMIC DNA]</scope>
    <source>
        <strain>BH72</strain>
    </source>
</reference>
<name>HEMH_AZOSB</name>
<organism>
    <name type="scientific">Azoarcus sp. (strain BH72)</name>
    <dbReference type="NCBI Taxonomy" id="418699"/>
    <lineage>
        <taxon>Bacteria</taxon>
        <taxon>Pseudomonadati</taxon>
        <taxon>Pseudomonadota</taxon>
        <taxon>Betaproteobacteria</taxon>
        <taxon>Rhodocyclales</taxon>
        <taxon>Zoogloeaceae</taxon>
        <taxon>Azoarcus</taxon>
    </lineage>
</organism>
<comment type="function">
    <text evidence="1">Catalyzes the ferrous insertion into protoporphyrin IX.</text>
</comment>
<comment type="catalytic activity">
    <reaction evidence="1">
        <text>heme b + 2 H(+) = protoporphyrin IX + Fe(2+)</text>
        <dbReference type="Rhea" id="RHEA:22584"/>
        <dbReference type="ChEBI" id="CHEBI:15378"/>
        <dbReference type="ChEBI" id="CHEBI:29033"/>
        <dbReference type="ChEBI" id="CHEBI:57306"/>
        <dbReference type="ChEBI" id="CHEBI:60344"/>
        <dbReference type="EC" id="4.98.1.1"/>
    </reaction>
</comment>
<comment type="pathway">
    <text evidence="1">Porphyrin-containing compound metabolism; protoheme biosynthesis; protoheme from protoporphyrin-IX: step 1/1.</text>
</comment>
<comment type="subcellular location">
    <subcellularLocation>
        <location evidence="1">Cytoplasm</location>
    </subcellularLocation>
</comment>
<comment type="similarity">
    <text evidence="1">Belongs to the ferrochelatase family.</text>
</comment>
<sequence length="363" mass="40511">MARFWTEAPHRHGSTARTGILLVNLGTPVAPTAAALRPYLQQFLSDPRVVEIPRAVWLPLLNGVILNTRPRKSAAKYASIWTDEGSPLAVHTRRQAELIAARFASRDDVRVDWAMRYGAPAVADKLGALRAAGCTRILVVPMYPQYAASTTASVMDEVARCLQHWRNLPELRFVRSFHDDPGYIGALAASVREHWTRHGQPDRLLMSFHGLPRYTLERGDPYHCECHRTARLLAESLGLAPERVIVSFQSRFGRTRWLEPYTQPTLEALARDGVGRVDVMCPGFVADCLETLEEIAMECRAAFLGAGGREFHYIPCLNERPDWIDALERRVRSEAGNWLTATPPTDAEREAARGRALALGAAE</sequence>
<gene>
    <name evidence="1" type="primary">hemH</name>
    <name type="ordered locus">azo2582</name>
</gene>
<proteinExistence type="inferred from homology"/>
<protein>
    <recommendedName>
        <fullName evidence="1">Ferrochelatase</fullName>
        <ecNumber evidence="1">4.98.1.1</ecNumber>
    </recommendedName>
    <alternativeName>
        <fullName evidence="1">Heme synthase</fullName>
    </alternativeName>
    <alternativeName>
        <fullName evidence="1">Protoheme ferro-lyase</fullName>
    </alternativeName>
</protein>